<accession>P76628</accession>
<accession>P76629</accession>
<accession>Q2MAC3</accession>
<keyword id="KW-0997">Cell inner membrane</keyword>
<keyword id="KW-1003">Cell membrane</keyword>
<keyword id="KW-0472">Membrane</keyword>
<keyword id="KW-1185">Reference proteome</keyword>
<keyword id="KW-0812">Transmembrane</keyword>
<keyword id="KW-1133">Transmembrane helix</keyword>
<keyword id="KW-0813">Transport</keyword>
<proteinExistence type="uncertain"/>
<protein>
    <recommendedName>
        <fullName>Putative uncharacterized transporter YgaY</fullName>
    </recommendedName>
</protein>
<name>YGAY_ECOLI</name>
<feature type="chain" id="PRO_0000173407" description="Putative uncharacterized transporter YgaY">
    <location>
        <begin position="1"/>
        <end position="394"/>
    </location>
</feature>
<feature type="transmembrane region" description="Helical" evidence="1">
    <location>
        <begin position="10"/>
        <end position="30"/>
    </location>
</feature>
<feature type="transmembrane region" description="Helical" evidence="1">
    <location>
        <begin position="50"/>
        <end position="70"/>
    </location>
</feature>
<feature type="transmembrane region" description="Helical" evidence="1">
    <location>
        <begin position="79"/>
        <end position="99"/>
    </location>
</feature>
<feature type="transmembrane region" description="Helical" evidence="1">
    <location>
        <begin position="100"/>
        <end position="120"/>
    </location>
</feature>
<feature type="transmembrane region" description="Helical" evidence="1">
    <location>
        <begin position="138"/>
        <end position="158"/>
    </location>
</feature>
<feature type="transmembrane region" description="Helical" evidence="1">
    <location>
        <begin position="166"/>
        <end position="186"/>
    </location>
</feature>
<feature type="transmembrane region" description="Helical" evidence="1">
    <location>
        <begin position="218"/>
        <end position="238"/>
    </location>
</feature>
<feature type="transmembrane region" description="Helical" evidence="1">
    <location>
        <begin position="243"/>
        <end position="263"/>
    </location>
</feature>
<feature type="transmembrane region" description="Helical" evidence="1">
    <location>
        <begin position="291"/>
        <end position="311"/>
    </location>
</feature>
<feature type="transmembrane region" description="Helical" evidence="1">
    <location>
        <begin position="337"/>
        <end position="357"/>
    </location>
</feature>
<feature type="transmembrane region" description="Helical" evidence="1">
    <location>
        <begin position="364"/>
        <end position="384"/>
    </location>
</feature>
<comment type="subcellular location">
    <subcellularLocation>
        <location evidence="2">Cell inner membrane</location>
        <topology evidence="2">Multi-pass membrane protein</topology>
    </subcellularLocation>
</comment>
<comment type="similarity">
    <text evidence="2">Belongs to the major facilitator superfamily.</text>
</comment>
<comment type="caution">
    <text evidence="2">Could be the product of a pseudogene. There seems to be a natural frameshift that produces two separate ORFs.</text>
</comment>
<comment type="sequence caution" evidence="2">
    <conflict type="frameshift">
        <sequence resource="EMBL-CDS" id="BAE76783"/>
    </conflict>
</comment>
<comment type="sequence caution" evidence="2">
    <conflict type="frameshift">
        <sequence resource="EMBL" id="U00096"/>
    </conflict>
</comment>
<dbReference type="EMBL" id="U00096">
    <property type="status" value="NOT_ANNOTATED_CDS"/>
    <property type="molecule type" value="Genomic_DNA"/>
</dbReference>
<dbReference type="EMBL" id="AP009048">
    <property type="protein sequence ID" value="BAE76783.1"/>
    <property type="status" value="ALT_FRAME"/>
    <property type="molecule type" value="Genomic_DNA"/>
</dbReference>
<dbReference type="PIR" id="A65048">
    <property type="entry name" value="A65048"/>
</dbReference>
<dbReference type="PIR" id="B65048">
    <property type="entry name" value="B65048"/>
</dbReference>
<dbReference type="RefSeq" id="WP_000165699.1">
    <property type="nucleotide sequence ID" value="NZ_STEB01000042.1"/>
</dbReference>
<dbReference type="SMR" id="P76628"/>
<dbReference type="BioGRID" id="4262259">
    <property type="interactions" value="8"/>
</dbReference>
<dbReference type="FunCoup" id="P76628">
    <property type="interactions" value="108"/>
</dbReference>
<dbReference type="TCDB" id="2.A.1.36.3">
    <property type="family name" value="the major facilitator superfamily (mfs)"/>
</dbReference>
<dbReference type="KEGG" id="ecj:JW2655"/>
<dbReference type="eggNOG" id="COG2814">
    <property type="taxonomic scope" value="Bacteria"/>
</dbReference>
<dbReference type="HOGENOM" id="CLU_180524_0_0_6"/>
<dbReference type="InParanoid" id="P76628"/>
<dbReference type="PhylomeDB" id="P76628"/>
<dbReference type="Proteomes" id="UP000000625">
    <property type="component" value="Chromosome"/>
</dbReference>
<dbReference type="GO" id="GO:0005886">
    <property type="term" value="C:plasma membrane"/>
    <property type="evidence" value="ECO:0007669"/>
    <property type="project" value="UniProtKB-SubCell"/>
</dbReference>
<dbReference type="GO" id="GO:0022857">
    <property type="term" value="F:transmembrane transporter activity"/>
    <property type="evidence" value="ECO:0007669"/>
    <property type="project" value="InterPro"/>
</dbReference>
<dbReference type="CDD" id="cd17324">
    <property type="entry name" value="MFS_NepI_like"/>
    <property type="match status" value="1"/>
</dbReference>
<dbReference type="Gene3D" id="1.20.1250.20">
    <property type="entry name" value="MFS general substrate transporter like domains"/>
    <property type="match status" value="1"/>
</dbReference>
<dbReference type="InterPro" id="IPR011701">
    <property type="entry name" value="MFS"/>
</dbReference>
<dbReference type="InterPro" id="IPR020846">
    <property type="entry name" value="MFS_dom"/>
</dbReference>
<dbReference type="InterPro" id="IPR036259">
    <property type="entry name" value="MFS_trans_sf"/>
</dbReference>
<dbReference type="PANTHER" id="PTHR42910:SF1">
    <property type="entry name" value="MAJOR FACILITATOR SUPERFAMILY (MFS) PROFILE DOMAIN-CONTAINING PROTEIN"/>
    <property type="match status" value="1"/>
</dbReference>
<dbReference type="PANTHER" id="PTHR42910">
    <property type="entry name" value="TRANSPORTER SCO4007-RELATED"/>
    <property type="match status" value="1"/>
</dbReference>
<dbReference type="Pfam" id="PF07690">
    <property type="entry name" value="MFS_1"/>
    <property type="match status" value="1"/>
</dbReference>
<dbReference type="SUPFAM" id="SSF103473">
    <property type="entry name" value="MFS general substrate transporter"/>
    <property type="match status" value="1"/>
</dbReference>
<dbReference type="PROSITE" id="PS50850">
    <property type="entry name" value="MFS"/>
    <property type="match status" value="1"/>
</dbReference>
<gene>
    <name type="primary">ygaY</name>
    <name type="ordered locus">b2681</name>
    <name type="ordered locus">JW2655</name>
    <name type="ORF">b2680</name>
</gene>
<evidence type="ECO:0000255" key="1"/>
<evidence type="ECO:0000305" key="2"/>
<reference key="1">
    <citation type="journal article" date="1997" name="Science">
        <title>The complete genome sequence of Escherichia coli K-12.</title>
        <authorList>
            <person name="Blattner F.R."/>
            <person name="Plunkett G. III"/>
            <person name="Bloch C.A."/>
            <person name="Perna N.T."/>
            <person name="Burland V."/>
            <person name="Riley M."/>
            <person name="Collado-Vides J."/>
            <person name="Glasner J.D."/>
            <person name="Rode C.K."/>
            <person name="Mayhew G.F."/>
            <person name="Gregor J."/>
            <person name="Davis N.W."/>
            <person name="Kirkpatrick H.A."/>
            <person name="Goeden M.A."/>
            <person name="Rose D.J."/>
            <person name="Mau B."/>
            <person name="Shao Y."/>
        </authorList>
    </citation>
    <scope>NUCLEOTIDE SEQUENCE [LARGE SCALE GENOMIC DNA]</scope>
    <source>
        <strain>K12 / MG1655 / ATCC 47076</strain>
    </source>
</reference>
<reference key="2">
    <citation type="journal article" date="2006" name="Mol. Syst. Biol.">
        <title>Highly accurate genome sequences of Escherichia coli K-12 strains MG1655 and W3110.</title>
        <authorList>
            <person name="Hayashi K."/>
            <person name="Morooka N."/>
            <person name="Yamamoto Y."/>
            <person name="Fujita K."/>
            <person name="Isono K."/>
            <person name="Choi S."/>
            <person name="Ohtsubo E."/>
            <person name="Baba T."/>
            <person name="Wanner B.L."/>
            <person name="Mori H."/>
            <person name="Horiuchi T."/>
        </authorList>
    </citation>
    <scope>NUCLEOTIDE SEQUENCE [LARGE SCALE GENOMIC DNA]</scope>
    <source>
        <strain>K12 / W3110 / ATCC 27325 / DSM 5911</strain>
    </source>
</reference>
<reference key="3">
    <citation type="unpublished observations" date="1999-01">
        <authorList>
            <person name="Rudd K.E."/>
        </authorList>
    </citation>
    <scope>CONCEPTUAL TRANSLATION</scope>
</reference>
<sequence length="394" mass="41655">MTKPNHELSPALIVLMSIATGLAVASNYYAQPLLDTIARNFSLSASSAGFIVTAAQLGYAAGLLFLVPLGDMFERRRLIVSMTLLAAGGMLITASSQSLAMMILGTALTGLFSVVAQILVPLAATLASPDKRGKVVGTIMSGLLLGILLARTVAGLLANLGGWRTVFWVASVLMALMALALWRGLPQMKSETHLNYPQLLGSVFSMFISDKILRTRALLGCLTFANFSILWTSMAFLLAAPPFNYSDGVIGLFGLAGAAGALGARPAGGFADKGKSHHTTTFGLLLLLLSWLAIWFGHTSVLALIIGILVLDLTVQGVHITNQTVIYRIHPDARNRLTAGYMTSYFIGGAAGSLISASAWQHGGWAGVCLAGATIALVNLLVWWRGFHRQEAAN</sequence>
<organism>
    <name type="scientific">Escherichia coli (strain K12)</name>
    <dbReference type="NCBI Taxonomy" id="83333"/>
    <lineage>
        <taxon>Bacteria</taxon>
        <taxon>Pseudomonadati</taxon>
        <taxon>Pseudomonadota</taxon>
        <taxon>Gammaproteobacteria</taxon>
        <taxon>Enterobacterales</taxon>
        <taxon>Enterobacteriaceae</taxon>
        <taxon>Escherichia</taxon>
    </lineage>
</organism>